<name>RNH_BAUCH</name>
<organism>
    <name type="scientific">Baumannia cicadellinicola subsp. Homalodisca coagulata</name>
    <dbReference type="NCBI Taxonomy" id="374463"/>
    <lineage>
        <taxon>Bacteria</taxon>
        <taxon>Pseudomonadati</taxon>
        <taxon>Pseudomonadota</taxon>
        <taxon>Gammaproteobacteria</taxon>
        <taxon>Candidatus Palibaumannia</taxon>
    </lineage>
</organism>
<sequence>MRKKIEIFTDGSCFGNPGPGGYGAILRYKKYEKEHSAGFLLTTNNRMELMAAIIALEFLRDPCEAIVYIDSKYVHQGVIQWIYNWKKHNWKNSAKKIIKNLDLWQRLDVVSNLHVIHWRWVKSHTGHPENERCDELARIAAEHPKFEDIGYKR</sequence>
<accession>Q1LT02</accession>
<comment type="function">
    <text evidence="1">Endonuclease that specifically degrades the RNA of RNA-DNA hybrids.</text>
</comment>
<comment type="catalytic activity">
    <reaction evidence="1">
        <text>Endonucleolytic cleavage to 5'-phosphomonoester.</text>
        <dbReference type="EC" id="3.1.26.4"/>
    </reaction>
</comment>
<comment type="cofactor">
    <cofactor evidence="1">
        <name>Mg(2+)</name>
        <dbReference type="ChEBI" id="CHEBI:18420"/>
    </cofactor>
    <text evidence="1">Binds 1 Mg(2+) ion per subunit. May bind a second metal ion at a regulatory site, or after substrate binding.</text>
</comment>
<comment type="subunit">
    <text evidence="1">Monomer.</text>
</comment>
<comment type="subcellular location">
    <subcellularLocation>
        <location evidence="1">Cytoplasm</location>
    </subcellularLocation>
</comment>
<comment type="similarity">
    <text evidence="1">Belongs to the RNase H family.</text>
</comment>
<keyword id="KW-0963">Cytoplasm</keyword>
<keyword id="KW-0255">Endonuclease</keyword>
<keyword id="KW-0378">Hydrolase</keyword>
<keyword id="KW-0460">Magnesium</keyword>
<keyword id="KW-0479">Metal-binding</keyword>
<keyword id="KW-0540">Nuclease</keyword>
<keyword id="KW-1185">Reference proteome</keyword>
<proteinExistence type="inferred from homology"/>
<feature type="chain" id="PRO_1000074633" description="Ribonuclease H">
    <location>
        <begin position="1"/>
        <end position="153"/>
    </location>
</feature>
<feature type="domain" description="RNase H type-1" evidence="2">
    <location>
        <begin position="1"/>
        <end position="142"/>
    </location>
</feature>
<feature type="binding site" evidence="1">
    <location>
        <position position="10"/>
    </location>
    <ligand>
        <name>Mg(2+)</name>
        <dbReference type="ChEBI" id="CHEBI:18420"/>
        <label>1</label>
    </ligand>
</feature>
<feature type="binding site" evidence="1">
    <location>
        <position position="10"/>
    </location>
    <ligand>
        <name>Mg(2+)</name>
        <dbReference type="ChEBI" id="CHEBI:18420"/>
        <label>2</label>
    </ligand>
</feature>
<feature type="binding site" evidence="1">
    <location>
        <position position="48"/>
    </location>
    <ligand>
        <name>Mg(2+)</name>
        <dbReference type="ChEBI" id="CHEBI:18420"/>
        <label>1</label>
    </ligand>
</feature>
<feature type="binding site" evidence="1">
    <location>
        <position position="70"/>
    </location>
    <ligand>
        <name>Mg(2+)</name>
        <dbReference type="ChEBI" id="CHEBI:18420"/>
        <label>1</label>
    </ligand>
</feature>
<feature type="binding site" evidence="1">
    <location>
        <position position="134"/>
    </location>
    <ligand>
        <name>Mg(2+)</name>
        <dbReference type="ChEBI" id="CHEBI:18420"/>
        <label>2</label>
    </ligand>
</feature>
<gene>
    <name evidence="1" type="primary">rnhA</name>
    <name type="ordered locus">BCI_0474</name>
</gene>
<reference key="1">
    <citation type="journal article" date="2006" name="PLoS Biol.">
        <title>Metabolic complementarity and genomics of the dual bacterial symbiosis of sharpshooters.</title>
        <authorList>
            <person name="Wu D."/>
            <person name="Daugherty S.C."/>
            <person name="Van Aken S.E."/>
            <person name="Pai G.H."/>
            <person name="Watkins K.L."/>
            <person name="Khouri H."/>
            <person name="Tallon L.J."/>
            <person name="Zaborsky J.M."/>
            <person name="Dunbar H.E."/>
            <person name="Tran P.L."/>
            <person name="Moran N.A."/>
            <person name="Eisen J.A."/>
        </authorList>
    </citation>
    <scope>NUCLEOTIDE SEQUENCE [LARGE SCALE GENOMIC DNA]</scope>
</reference>
<evidence type="ECO:0000255" key="1">
    <source>
        <dbReference type="HAMAP-Rule" id="MF_00042"/>
    </source>
</evidence>
<evidence type="ECO:0000255" key="2">
    <source>
        <dbReference type="PROSITE-ProRule" id="PRU00408"/>
    </source>
</evidence>
<protein>
    <recommendedName>
        <fullName evidence="1">Ribonuclease H</fullName>
        <shortName evidence="1">RNase H</shortName>
        <ecNumber evidence="1">3.1.26.4</ecNumber>
    </recommendedName>
</protein>
<dbReference type="EC" id="3.1.26.4" evidence="1"/>
<dbReference type="EMBL" id="CP000238">
    <property type="protein sequence ID" value="ABF14254.1"/>
    <property type="molecule type" value="Genomic_DNA"/>
</dbReference>
<dbReference type="RefSeq" id="WP_011520645.1">
    <property type="nucleotide sequence ID" value="NC_007984.1"/>
</dbReference>
<dbReference type="SMR" id="Q1LT02"/>
<dbReference type="STRING" id="374463.BCI_0474"/>
<dbReference type="KEGG" id="bci:BCI_0474"/>
<dbReference type="HOGENOM" id="CLU_030894_6_0_6"/>
<dbReference type="OrthoDB" id="7845843at2"/>
<dbReference type="Proteomes" id="UP000002427">
    <property type="component" value="Chromosome"/>
</dbReference>
<dbReference type="GO" id="GO:0005737">
    <property type="term" value="C:cytoplasm"/>
    <property type="evidence" value="ECO:0007669"/>
    <property type="project" value="UniProtKB-SubCell"/>
</dbReference>
<dbReference type="GO" id="GO:0000287">
    <property type="term" value="F:magnesium ion binding"/>
    <property type="evidence" value="ECO:0007669"/>
    <property type="project" value="UniProtKB-UniRule"/>
</dbReference>
<dbReference type="GO" id="GO:0003676">
    <property type="term" value="F:nucleic acid binding"/>
    <property type="evidence" value="ECO:0007669"/>
    <property type="project" value="InterPro"/>
</dbReference>
<dbReference type="GO" id="GO:0004523">
    <property type="term" value="F:RNA-DNA hybrid ribonuclease activity"/>
    <property type="evidence" value="ECO:0007669"/>
    <property type="project" value="UniProtKB-UniRule"/>
</dbReference>
<dbReference type="GO" id="GO:0043137">
    <property type="term" value="P:DNA replication, removal of RNA primer"/>
    <property type="evidence" value="ECO:0007669"/>
    <property type="project" value="TreeGrafter"/>
</dbReference>
<dbReference type="CDD" id="cd09278">
    <property type="entry name" value="RNase_HI_prokaryote_like"/>
    <property type="match status" value="1"/>
</dbReference>
<dbReference type="FunFam" id="3.30.420.10:FF:000089">
    <property type="entry name" value="Ribonuclease H"/>
    <property type="match status" value="1"/>
</dbReference>
<dbReference type="Gene3D" id="3.30.420.10">
    <property type="entry name" value="Ribonuclease H-like superfamily/Ribonuclease H"/>
    <property type="match status" value="1"/>
</dbReference>
<dbReference type="HAMAP" id="MF_00042">
    <property type="entry name" value="RNase_H"/>
    <property type="match status" value="1"/>
</dbReference>
<dbReference type="InterPro" id="IPR050092">
    <property type="entry name" value="RNase_H"/>
</dbReference>
<dbReference type="InterPro" id="IPR012337">
    <property type="entry name" value="RNaseH-like_sf"/>
</dbReference>
<dbReference type="InterPro" id="IPR002156">
    <property type="entry name" value="RNaseH_domain"/>
</dbReference>
<dbReference type="InterPro" id="IPR036397">
    <property type="entry name" value="RNaseH_sf"/>
</dbReference>
<dbReference type="InterPro" id="IPR022892">
    <property type="entry name" value="RNaseHI"/>
</dbReference>
<dbReference type="NCBIfam" id="NF001236">
    <property type="entry name" value="PRK00203.1"/>
    <property type="match status" value="1"/>
</dbReference>
<dbReference type="PANTHER" id="PTHR10642">
    <property type="entry name" value="RIBONUCLEASE H1"/>
    <property type="match status" value="1"/>
</dbReference>
<dbReference type="PANTHER" id="PTHR10642:SF26">
    <property type="entry name" value="RIBONUCLEASE H1"/>
    <property type="match status" value="1"/>
</dbReference>
<dbReference type="Pfam" id="PF00075">
    <property type="entry name" value="RNase_H"/>
    <property type="match status" value="1"/>
</dbReference>
<dbReference type="SUPFAM" id="SSF53098">
    <property type="entry name" value="Ribonuclease H-like"/>
    <property type="match status" value="1"/>
</dbReference>
<dbReference type="PROSITE" id="PS50879">
    <property type="entry name" value="RNASE_H_1"/>
    <property type="match status" value="1"/>
</dbReference>